<proteinExistence type="inferred from homology"/>
<keyword id="KW-0687">Ribonucleoprotein</keyword>
<keyword id="KW-0689">Ribosomal protein</keyword>
<keyword id="KW-0694">RNA-binding</keyword>
<keyword id="KW-0699">rRNA-binding</keyword>
<name>RS15_UREU1</name>
<gene>
    <name evidence="1" type="primary">rpsO</name>
    <name type="ordered locus">UUR10_0195</name>
</gene>
<feature type="chain" id="PRO_1000143189" description="Small ribosomal subunit protein uS15">
    <location>
        <begin position="1"/>
        <end position="89"/>
    </location>
</feature>
<reference key="1">
    <citation type="submission" date="2008-10" db="EMBL/GenBank/DDBJ databases">
        <title>Genome sequence of Ureaplasma urealyticum serovar 10 ATCC-33699.</title>
        <authorList>
            <person name="Shrivastava S."/>
            <person name="Methe B.A."/>
            <person name="Glass J."/>
            <person name="White K."/>
            <person name="Duffy L.B."/>
        </authorList>
    </citation>
    <scope>NUCLEOTIDE SEQUENCE [LARGE SCALE GENOMIC DNA]</scope>
    <source>
        <strain>ATCC 33699 / Western</strain>
    </source>
</reference>
<organism>
    <name type="scientific">Ureaplasma urealyticum serovar 10 (strain ATCC 33699 / Western)</name>
    <dbReference type="NCBI Taxonomy" id="565575"/>
    <lineage>
        <taxon>Bacteria</taxon>
        <taxon>Bacillati</taxon>
        <taxon>Mycoplasmatota</taxon>
        <taxon>Mycoplasmoidales</taxon>
        <taxon>Mycoplasmoidaceae</taxon>
        <taxon>Ureaplasma</taxon>
    </lineage>
</organism>
<evidence type="ECO:0000255" key="1">
    <source>
        <dbReference type="HAMAP-Rule" id="MF_01343"/>
    </source>
</evidence>
<evidence type="ECO:0000305" key="2"/>
<protein>
    <recommendedName>
        <fullName evidence="1">Small ribosomal subunit protein uS15</fullName>
    </recommendedName>
    <alternativeName>
        <fullName evidence="2">30S ribosomal protein S15</fullName>
    </alternativeName>
</protein>
<dbReference type="EMBL" id="CP001184">
    <property type="protein sequence ID" value="ACI60094.1"/>
    <property type="molecule type" value="Genomic_DNA"/>
</dbReference>
<dbReference type="RefSeq" id="WP_004025791.1">
    <property type="nucleotide sequence ID" value="NC_011374.1"/>
</dbReference>
<dbReference type="SMR" id="B5ZB10"/>
<dbReference type="STRING" id="565575.UUR10_0195"/>
<dbReference type="GeneID" id="93848676"/>
<dbReference type="KEGG" id="uue:UUR10_0195"/>
<dbReference type="eggNOG" id="COG0184">
    <property type="taxonomic scope" value="Bacteria"/>
</dbReference>
<dbReference type="HOGENOM" id="CLU_148518_1_0_14"/>
<dbReference type="OrthoDB" id="9799262at2"/>
<dbReference type="Proteomes" id="UP000002018">
    <property type="component" value="Chromosome"/>
</dbReference>
<dbReference type="GO" id="GO:0022627">
    <property type="term" value="C:cytosolic small ribosomal subunit"/>
    <property type="evidence" value="ECO:0007669"/>
    <property type="project" value="TreeGrafter"/>
</dbReference>
<dbReference type="GO" id="GO:0019843">
    <property type="term" value="F:rRNA binding"/>
    <property type="evidence" value="ECO:0007669"/>
    <property type="project" value="UniProtKB-UniRule"/>
</dbReference>
<dbReference type="GO" id="GO:0003735">
    <property type="term" value="F:structural constituent of ribosome"/>
    <property type="evidence" value="ECO:0007669"/>
    <property type="project" value="InterPro"/>
</dbReference>
<dbReference type="GO" id="GO:0006412">
    <property type="term" value="P:translation"/>
    <property type="evidence" value="ECO:0007669"/>
    <property type="project" value="UniProtKB-UniRule"/>
</dbReference>
<dbReference type="CDD" id="cd00353">
    <property type="entry name" value="Ribosomal_S15p_S13e"/>
    <property type="match status" value="1"/>
</dbReference>
<dbReference type="Gene3D" id="6.10.250.3130">
    <property type="match status" value="1"/>
</dbReference>
<dbReference type="Gene3D" id="1.10.287.10">
    <property type="entry name" value="S15/NS1, RNA-binding"/>
    <property type="match status" value="1"/>
</dbReference>
<dbReference type="HAMAP" id="MF_01343_B">
    <property type="entry name" value="Ribosomal_uS15_B"/>
    <property type="match status" value="1"/>
</dbReference>
<dbReference type="InterPro" id="IPR000589">
    <property type="entry name" value="Ribosomal_uS15"/>
</dbReference>
<dbReference type="InterPro" id="IPR005290">
    <property type="entry name" value="Ribosomal_uS15_bac-type"/>
</dbReference>
<dbReference type="InterPro" id="IPR009068">
    <property type="entry name" value="uS15_NS1_RNA-bd_sf"/>
</dbReference>
<dbReference type="NCBIfam" id="TIGR00952">
    <property type="entry name" value="S15_bact"/>
    <property type="match status" value="1"/>
</dbReference>
<dbReference type="PANTHER" id="PTHR23321">
    <property type="entry name" value="RIBOSOMAL PROTEIN S15, BACTERIAL AND ORGANELLAR"/>
    <property type="match status" value="1"/>
</dbReference>
<dbReference type="PANTHER" id="PTHR23321:SF26">
    <property type="entry name" value="SMALL RIBOSOMAL SUBUNIT PROTEIN US15M"/>
    <property type="match status" value="1"/>
</dbReference>
<dbReference type="Pfam" id="PF00312">
    <property type="entry name" value="Ribosomal_S15"/>
    <property type="match status" value="1"/>
</dbReference>
<dbReference type="SMART" id="SM01387">
    <property type="entry name" value="Ribosomal_S15"/>
    <property type="match status" value="1"/>
</dbReference>
<dbReference type="SUPFAM" id="SSF47060">
    <property type="entry name" value="S15/NS1 RNA-binding domain"/>
    <property type="match status" value="1"/>
</dbReference>
<dbReference type="PROSITE" id="PS00362">
    <property type="entry name" value="RIBOSOMAL_S15"/>
    <property type="match status" value="1"/>
</dbReference>
<sequence length="89" mass="10074">MAVSKQQKHDLTVKFGGSASNTGKTEVQVAILSAEIDSLTTHMIENKKDKASKRGLYKKVAQRKKLLSYLQRVDIERYRALIKELNLRG</sequence>
<accession>B5ZB10</accession>
<comment type="function">
    <text evidence="1">One of the primary rRNA binding proteins, it binds directly to 16S rRNA where it helps nucleate assembly of the platform of the 30S subunit by binding and bridging several RNA helices of the 16S rRNA.</text>
</comment>
<comment type="function">
    <text evidence="1">Forms an intersubunit bridge (bridge B4) with the 23S rRNA of the 50S subunit in the ribosome.</text>
</comment>
<comment type="subunit">
    <text evidence="1">Part of the 30S ribosomal subunit. Forms a bridge to the 50S subunit in the 70S ribosome, contacting the 23S rRNA.</text>
</comment>
<comment type="similarity">
    <text evidence="1">Belongs to the universal ribosomal protein uS15 family.</text>
</comment>